<feature type="chain" id="PRO_1000018999" description="1-deoxy-D-xylulose-5-phosphate synthase">
    <location>
        <begin position="1"/>
        <end position="629"/>
    </location>
</feature>
<feature type="binding site" evidence="1">
    <location>
        <position position="78"/>
    </location>
    <ligand>
        <name>thiamine diphosphate</name>
        <dbReference type="ChEBI" id="CHEBI:58937"/>
    </ligand>
</feature>
<feature type="binding site" evidence="1">
    <location>
        <begin position="119"/>
        <end position="121"/>
    </location>
    <ligand>
        <name>thiamine diphosphate</name>
        <dbReference type="ChEBI" id="CHEBI:58937"/>
    </ligand>
</feature>
<feature type="binding site" evidence="1">
    <location>
        <position position="150"/>
    </location>
    <ligand>
        <name>Mg(2+)</name>
        <dbReference type="ChEBI" id="CHEBI:18420"/>
    </ligand>
</feature>
<feature type="binding site" evidence="1">
    <location>
        <begin position="151"/>
        <end position="152"/>
    </location>
    <ligand>
        <name>thiamine diphosphate</name>
        <dbReference type="ChEBI" id="CHEBI:58937"/>
    </ligand>
</feature>
<feature type="binding site" evidence="1">
    <location>
        <position position="179"/>
    </location>
    <ligand>
        <name>Mg(2+)</name>
        <dbReference type="ChEBI" id="CHEBI:18420"/>
    </ligand>
</feature>
<feature type="binding site" evidence="1">
    <location>
        <position position="179"/>
    </location>
    <ligand>
        <name>thiamine diphosphate</name>
        <dbReference type="ChEBI" id="CHEBI:58937"/>
    </ligand>
</feature>
<feature type="binding site" evidence="1">
    <location>
        <position position="286"/>
    </location>
    <ligand>
        <name>thiamine diphosphate</name>
        <dbReference type="ChEBI" id="CHEBI:58937"/>
    </ligand>
</feature>
<feature type="binding site" evidence="1">
    <location>
        <position position="368"/>
    </location>
    <ligand>
        <name>thiamine diphosphate</name>
        <dbReference type="ChEBI" id="CHEBI:58937"/>
    </ligand>
</feature>
<accession>A1W4U9</accession>
<proteinExistence type="inferred from homology"/>
<reference key="1">
    <citation type="submission" date="2006-12" db="EMBL/GenBank/DDBJ databases">
        <title>Complete sequence of chromosome 1 of Acidovorax sp. JS42.</title>
        <authorList>
            <person name="Copeland A."/>
            <person name="Lucas S."/>
            <person name="Lapidus A."/>
            <person name="Barry K."/>
            <person name="Detter J.C."/>
            <person name="Glavina del Rio T."/>
            <person name="Dalin E."/>
            <person name="Tice H."/>
            <person name="Pitluck S."/>
            <person name="Chertkov O."/>
            <person name="Brettin T."/>
            <person name="Bruce D."/>
            <person name="Han C."/>
            <person name="Tapia R."/>
            <person name="Gilna P."/>
            <person name="Schmutz J."/>
            <person name="Larimer F."/>
            <person name="Land M."/>
            <person name="Hauser L."/>
            <person name="Kyrpides N."/>
            <person name="Kim E."/>
            <person name="Stahl D."/>
            <person name="Richardson P."/>
        </authorList>
    </citation>
    <scope>NUCLEOTIDE SEQUENCE [LARGE SCALE GENOMIC DNA]</scope>
    <source>
        <strain>JS42</strain>
    </source>
</reference>
<evidence type="ECO:0000255" key="1">
    <source>
        <dbReference type="HAMAP-Rule" id="MF_00315"/>
    </source>
</evidence>
<dbReference type="EC" id="2.2.1.7" evidence="1"/>
<dbReference type="EMBL" id="CP000539">
    <property type="protein sequence ID" value="ABM41274.1"/>
    <property type="molecule type" value="Genomic_DNA"/>
</dbReference>
<dbReference type="SMR" id="A1W4U9"/>
<dbReference type="STRING" id="232721.Ajs_1038"/>
<dbReference type="KEGG" id="ajs:Ajs_1038"/>
<dbReference type="eggNOG" id="COG1154">
    <property type="taxonomic scope" value="Bacteria"/>
</dbReference>
<dbReference type="HOGENOM" id="CLU_009227_1_4_4"/>
<dbReference type="UniPathway" id="UPA00064">
    <property type="reaction ID" value="UER00091"/>
</dbReference>
<dbReference type="Proteomes" id="UP000000645">
    <property type="component" value="Chromosome"/>
</dbReference>
<dbReference type="GO" id="GO:0005829">
    <property type="term" value="C:cytosol"/>
    <property type="evidence" value="ECO:0007669"/>
    <property type="project" value="TreeGrafter"/>
</dbReference>
<dbReference type="GO" id="GO:0008661">
    <property type="term" value="F:1-deoxy-D-xylulose-5-phosphate synthase activity"/>
    <property type="evidence" value="ECO:0007669"/>
    <property type="project" value="UniProtKB-UniRule"/>
</dbReference>
<dbReference type="GO" id="GO:0000287">
    <property type="term" value="F:magnesium ion binding"/>
    <property type="evidence" value="ECO:0007669"/>
    <property type="project" value="UniProtKB-UniRule"/>
</dbReference>
<dbReference type="GO" id="GO:0030976">
    <property type="term" value="F:thiamine pyrophosphate binding"/>
    <property type="evidence" value="ECO:0007669"/>
    <property type="project" value="UniProtKB-UniRule"/>
</dbReference>
<dbReference type="GO" id="GO:0052865">
    <property type="term" value="P:1-deoxy-D-xylulose 5-phosphate biosynthetic process"/>
    <property type="evidence" value="ECO:0007669"/>
    <property type="project" value="UniProtKB-UniPathway"/>
</dbReference>
<dbReference type="GO" id="GO:0019288">
    <property type="term" value="P:isopentenyl diphosphate biosynthetic process, methylerythritol 4-phosphate pathway"/>
    <property type="evidence" value="ECO:0007669"/>
    <property type="project" value="TreeGrafter"/>
</dbReference>
<dbReference type="GO" id="GO:0016114">
    <property type="term" value="P:terpenoid biosynthetic process"/>
    <property type="evidence" value="ECO:0007669"/>
    <property type="project" value="UniProtKB-UniRule"/>
</dbReference>
<dbReference type="GO" id="GO:0009228">
    <property type="term" value="P:thiamine biosynthetic process"/>
    <property type="evidence" value="ECO:0007669"/>
    <property type="project" value="UniProtKB-UniRule"/>
</dbReference>
<dbReference type="CDD" id="cd02007">
    <property type="entry name" value="TPP_DXS"/>
    <property type="match status" value="1"/>
</dbReference>
<dbReference type="CDD" id="cd07033">
    <property type="entry name" value="TPP_PYR_DXS_TK_like"/>
    <property type="match status" value="1"/>
</dbReference>
<dbReference type="FunFam" id="3.40.50.920:FF:000002">
    <property type="entry name" value="1-deoxy-D-xylulose-5-phosphate synthase"/>
    <property type="match status" value="1"/>
</dbReference>
<dbReference type="FunFam" id="3.40.50.970:FF:000005">
    <property type="entry name" value="1-deoxy-D-xylulose-5-phosphate synthase"/>
    <property type="match status" value="1"/>
</dbReference>
<dbReference type="Gene3D" id="3.40.50.920">
    <property type="match status" value="1"/>
</dbReference>
<dbReference type="Gene3D" id="3.40.50.970">
    <property type="match status" value="2"/>
</dbReference>
<dbReference type="HAMAP" id="MF_00315">
    <property type="entry name" value="DXP_synth"/>
    <property type="match status" value="1"/>
</dbReference>
<dbReference type="InterPro" id="IPR005477">
    <property type="entry name" value="Dxylulose-5-P_synthase"/>
</dbReference>
<dbReference type="InterPro" id="IPR029061">
    <property type="entry name" value="THDP-binding"/>
</dbReference>
<dbReference type="InterPro" id="IPR009014">
    <property type="entry name" value="Transketo_C/PFOR_II"/>
</dbReference>
<dbReference type="InterPro" id="IPR005475">
    <property type="entry name" value="Transketolase-like_Pyr-bd"/>
</dbReference>
<dbReference type="InterPro" id="IPR020826">
    <property type="entry name" value="Transketolase_BS"/>
</dbReference>
<dbReference type="InterPro" id="IPR033248">
    <property type="entry name" value="Transketolase_C"/>
</dbReference>
<dbReference type="InterPro" id="IPR049557">
    <property type="entry name" value="Transketolase_CS"/>
</dbReference>
<dbReference type="NCBIfam" id="TIGR00204">
    <property type="entry name" value="dxs"/>
    <property type="match status" value="1"/>
</dbReference>
<dbReference type="NCBIfam" id="NF003933">
    <property type="entry name" value="PRK05444.2-2"/>
    <property type="match status" value="1"/>
</dbReference>
<dbReference type="PANTHER" id="PTHR43322">
    <property type="entry name" value="1-D-DEOXYXYLULOSE 5-PHOSPHATE SYNTHASE-RELATED"/>
    <property type="match status" value="1"/>
</dbReference>
<dbReference type="PANTHER" id="PTHR43322:SF5">
    <property type="entry name" value="1-DEOXY-D-XYLULOSE-5-PHOSPHATE SYNTHASE, CHLOROPLASTIC"/>
    <property type="match status" value="1"/>
</dbReference>
<dbReference type="Pfam" id="PF13292">
    <property type="entry name" value="DXP_synthase_N"/>
    <property type="match status" value="1"/>
</dbReference>
<dbReference type="Pfam" id="PF02779">
    <property type="entry name" value="Transket_pyr"/>
    <property type="match status" value="1"/>
</dbReference>
<dbReference type="Pfam" id="PF02780">
    <property type="entry name" value="Transketolase_C"/>
    <property type="match status" value="1"/>
</dbReference>
<dbReference type="SMART" id="SM00861">
    <property type="entry name" value="Transket_pyr"/>
    <property type="match status" value="1"/>
</dbReference>
<dbReference type="SUPFAM" id="SSF52518">
    <property type="entry name" value="Thiamin diphosphate-binding fold (THDP-binding)"/>
    <property type="match status" value="2"/>
</dbReference>
<dbReference type="SUPFAM" id="SSF52922">
    <property type="entry name" value="TK C-terminal domain-like"/>
    <property type="match status" value="1"/>
</dbReference>
<dbReference type="PROSITE" id="PS00801">
    <property type="entry name" value="TRANSKETOLASE_1"/>
    <property type="match status" value="1"/>
</dbReference>
<dbReference type="PROSITE" id="PS00802">
    <property type="entry name" value="TRANSKETOLASE_2"/>
    <property type="match status" value="1"/>
</dbReference>
<keyword id="KW-0414">Isoprene biosynthesis</keyword>
<keyword id="KW-0460">Magnesium</keyword>
<keyword id="KW-0479">Metal-binding</keyword>
<keyword id="KW-0784">Thiamine biosynthesis</keyword>
<keyword id="KW-0786">Thiamine pyrophosphate</keyword>
<keyword id="KW-0808">Transferase</keyword>
<gene>
    <name evidence="1" type="primary">dxs</name>
    <name type="ordered locus">Ajs_1038</name>
</gene>
<comment type="function">
    <text evidence="1">Catalyzes the acyloin condensation reaction between C atoms 2 and 3 of pyruvate and glyceraldehyde 3-phosphate to yield 1-deoxy-D-xylulose-5-phosphate (DXP).</text>
</comment>
<comment type="catalytic activity">
    <reaction evidence="1">
        <text>D-glyceraldehyde 3-phosphate + pyruvate + H(+) = 1-deoxy-D-xylulose 5-phosphate + CO2</text>
        <dbReference type="Rhea" id="RHEA:12605"/>
        <dbReference type="ChEBI" id="CHEBI:15361"/>
        <dbReference type="ChEBI" id="CHEBI:15378"/>
        <dbReference type="ChEBI" id="CHEBI:16526"/>
        <dbReference type="ChEBI" id="CHEBI:57792"/>
        <dbReference type="ChEBI" id="CHEBI:59776"/>
        <dbReference type="EC" id="2.2.1.7"/>
    </reaction>
</comment>
<comment type="cofactor">
    <cofactor evidence="1">
        <name>Mg(2+)</name>
        <dbReference type="ChEBI" id="CHEBI:18420"/>
    </cofactor>
    <text evidence="1">Binds 1 Mg(2+) ion per subunit.</text>
</comment>
<comment type="cofactor">
    <cofactor evidence="1">
        <name>thiamine diphosphate</name>
        <dbReference type="ChEBI" id="CHEBI:58937"/>
    </cofactor>
    <text evidence="1">Binds 1 thiamine pyrophosphate per subunit.</text>
</comment>
<comment type="pathway">
    <text evidence="1">Metabolic intermediate biosynthesis; 1-deoxy-D-xylulose 5-phosphate biosynthesis; 1-deoxy-D-xylulose 5-phosphate from D-glyceraldehyde 3-phosphate and pyruvate: step 1/1.</text>
</comment>
<comment type="subunit">
    <text evidence="1">Homodimer.</text>
</comment>
<comment type="similarity">
    <text evidence="1">Belongs to the transketolase family. DXPS subfamily.</text>
</comment>
<organism>
    <name type="scientific">Acidovorax sp. (strain JS42)</name>
    <dbReference type="NCBI Taxonomy" id="232721"/>
    <lineage>
        <taxon>Bacteria</taxon>
        <taxon>Pseudomonadati</taxon>
        <taxon>Pseudomonadota</taxon>
        <taxon>Betaproteobacteria</taxon>
        <taxon>Burkholderiales</taxon>
        <taxon>Comamonadaceae</taxon>
        <taxon>Acidovorax</taxon>
    </lineage>
</organism>
<name>DXS_ACISJ</name>
<protein>
    <recommendedName>
        <fullName evidence="1">1-deoxy-D-xylulose-5-phosphate synthase</fullName>
        <ecNumber evidence="1">2.2.1.7</ecNumber>
    </recommendedName>
    <alternativeName>
        <fullName evidence="1">1-deoxyxylulose-5-phosphate synthase</fullName>
        <shortName evidence="1">DXP synthase</shortName>
        <shortName evidence="1">DXPS</shortName>
    </alternativeName>
</protein>
<sequence length="629" mass="67633">MSMTNYPLLERVNDPADLRRLPRAELKTLAHELRAFVLESVSKTGGHLSSNLGTVELTVALHAVFDTPRDRLVWDVGHQTYPHKILTGRRDRMPSLRQLGGLSGFPQRAESEYDTFGTAHSSTSISAALGMALAAKQRGDERRCVAIIGDGAMTAGMAFEALNNAGVADANLLVILNDNDMSISPPVGALNRYLAQLMSGQFYAKARDMGKSVLKNAPPLLELAKRLEQQAKGMVVPATLFEKFGFNYIGPIDGHDLDSLIPTLENIRGLKGPQFLHVVTKKGQGYKLAEADPVAYHGPGKFDPRVGLVKPATPPKQTFTQVFGQWLCDMADKDKRLVGITPAMREGSGMVEFHQRFPDRYYDVGIAEQHAVTFAAGMACEGVKPVVAIYSTFLQRAYDQLIHDVALQNLPVVFALDRAGLVGADGATHAGAYDIAFVRCIPHMSMACPADERECRQLLTTAYEQDHPVAVRYPRGAGVGVAPLPDLEGLPFGKGEVRRTGQRIAILAFGTLLYPALQAAQALDATVVNMRWAKPLDTQLLLQVAAEHDALVTVEEGCIMGGAGSAVAEALAAAGLQRPLLQLGLPDVFIEHGDPAKLLALQGLDAAGMQRSITERFGALPGAQALAAA</sequence>